<comment type="function">
    <text evidence="1">Involved in the maturation of specific proteins in the endoplasmic reticulum.</text>
</comment>
<comment type="subcellular location">
    <subcellularLocation>
        <location evidence="1">Endoplasmic reticulum membrane</location>
        <topology evidence="1">Multi-pass membrane protein</topology>
    </subcellularLocation>
</comment>
<comment type="similarity">
    <text evidence="4">Belongs to the lipase maturation factor family.</text>
</comment>
<name>LMF2_XENTR</name>
<sequence length="707" mass="81968">MGEQRLARSSFLWGLSGIYLVAFVSLYAQIPGLYGREGILPAWKMMRFTGKGFWEQLKDSPSLLWFGPRLGLDTEMTMEMICLLGALLSLGALLFSFLRDSLVFLLLWIFYLSLYQVGQVFLYFQWDSLLLETGFLAVLVAPVHALRWKTSVWSSHDGVTFWLTRWLLFRLMFASGIVKLTSRCPTWWGLTALTYHYETQCIPNPAAWFAHQLPVWFQKFSVVATYFIEIGVPLLFFLPFRRLRLFSFYSQVVLQILIIMTGNYNFFNLLTVVLCCSLLDDQHITFFQRHKKPQHKGGRVTSAFSLYSLISLLDVPIFGLLVFWTVKYFDLQINWEKHSVESRTAFTYHDFQQWLRTITFPTIWIAAASLGWEILKGMYRSASVRGIFWKLWSTLQWVIFSCAAVAMFTISLVPYTYIDFESNGHLWPEVHRMFNAVDRYQLVNSYGLFRRMTGVGGRPEVIVEGSYDRETWTEIEFMYKPGNISTTPSVIIPHQPRLDWQMWFAALAHNSHSPWFASFVYRLLQGNKDVIHLVQNDESLYPFHAYPPTYIRAQLYKYWFTEVDQSGQMPKSWWRRRHVEEFFPAVFLGDPFLDNLLTQHGLKDKPPARRSLDAPIPSALRLIRAFLHPLPAPLLLHSFIFGIFTIYFLQAMFGGVSKPGVAKQRHSKPPNEKKKQKSNSGQGESAAAKSSGHGADTVRRNKKNEKS</sequence>
<keyword id="KW-0256">Endoplasmic reticulum</keyword>
<keyword id="KW-0325">Glycoprotein</keyword>
<keyword id="KW-0472">Membrane</keyword>
<keyword id="KW-1185">Reference proteome</keyword>
<keyword id="KW-0812">Transmembrane</keyword>
<keyword id="KW-1133">Transmembrane helix</keyword>
<protein>
    <recommendedName>
        <fullName>Lipase maturation factor 2</fullName>
    </recommendedName>
</protein>
<accession>Q0P4Y8</accession>
<accession>Q569N7</accession>
<organism>
    <name type="scientific">Xenopus tropicalis</name>
    <name type="common">Western clawed frog</name>
    <name type="synonym">Silurana tropicalis</name>
    <dbReference type="NCBI Taxonomy" id="8364"/>
    <lineage>
        <taxon>Eukaryota</taxon>
        <taxon>Metazoa</taxon>
        <taxon>Chordata</taxon>
        <taxon>Craniata</taxon>
        <taxon>Vertebrata</taxon>
        <taxon>Euteleostomi</taxon>
        <taxon>Amphibia</taxon>
        <taxon>Batrachia</taxon>
        <taxon>Anura</taxon>
        <taxon>Pipoidea</taxon>
        <taxon>Pipidae</taxon>
        <taxon>Xenopodinae</taxon>
        <taxon>Xenopus</taxon>
        <taxon>Silurana</taxon>
    </lineage>
</organism>
<feature type="chain" id="PRO_0000324515" description="Lipase maturation factor 2">
    <location>
        <begin position="1"/>
        <end position="707"/>
    </location>
</feature>
<feature type="transmembrane region" description="Helical" evidence="2">
    <location>
        <begin position="11"/>
        <end position="31"/>
    </location>
</feature>
<feature type="transmembrane region" description="Helical" evidence="2">
    <location>
        <begin position="78"/>
        <end position="98"/>
    </location>
</feature>
<feature type="transmembrane region" description="Helical" evidence="2">
    <location>
        <begin position="102"/>
        <end position="122"/>
    </location>
</feature>
<feature type="transmembrane region" description="Helical" evidence="2">
    <location>
        <begin position="126"/>
        <end position="146"/>
    </location>
</feature>
<feature type="transmembrane region" description="Helical" evidence="2">
    <location>
        <begin position="220"/>
        <end position="240"/>
    </location>
</feature>
<feature type="transmembrane region" description="Helical" evidence="2">
    <location>
        <begin position="256"/>
        <end position="276"/>
    </location>
</feature>
<feature type="transmembrane region" description="Helical" evidence="2">
    <location>
        <begin position="306"/>
        <end position="326"/>
    </location>
</feature>
<feature type="transmembrane region" description="Helical" evidence="2">
    <location>
        <begin position="358"/>
        <end position="378"/>
    </location>
</feature>
<feature type="transmembrane region" description="Helical" evidence="2">
    <location>
        <begin position="398"/>
        <end position="418"/>
    </location>
</feature>
<feature type="transmembrane region" description="Helical" evidence="2">
    <location>
        <begin position="634"/>
        <end position="654"/>
    </location>
</feature>
<feature type="region of interest" description="Disordered" evidence="3">
    <location>
        <begin position="659"/>
        <end position="707"/>
    </location>
</feature>
<feature type="compositionally biased region" description="Basic and acidic residues" evidence="3">
    <location>
        <begin position="696"/>
        <end position="707"/>
    </location>
</feature>
<feature type="glycosylation site" description="N-linked (GlcNAc...) asparagine" evidence="2">
    <location>
        <position position="483"/>
    </location>
</feature>
<feature type="sequence conflict" description="In Ref. 1; AAH92370." evidence="4" ref="1">
    <original>M</original>
    <variation>L</variation>
    <location>
        <position position="80"/>
    </location>
</feature>
<feature type="sequence conflict" description="In Ref. 1; AAH92370." evidence="4" ref="1">
    <original>V</original>
    <variation>L</variation>
    <location>
        <position position="143"/>
    </location>
</feature>
<feature type="sequence conflict" description="In Ref. 1; AAH92370." evidence="4" ref="1">
    <original>W</original>
    <variation>C</variation>
    <location>
        <position position="148"/>
    </location>
</feature>
<gene>
    <name type="primary">lmf2</name>
</gene>
<dbReference type="EMBL" id="BC092370">
    <property type="protein sequence ID" value="AAH92370.1"/>
    <property type="molecule type" value="mRNA"/>
</dbReference>
<dbReference type="EMBL" id="BC121839">
    <property type="protein sequence ID" value="AAI21840.1"/>
    <property type="molecule type" value="mRNA"/>
</dbReference>
<dbReference type="RefSeq" id="NP_001072170.1">
    <property type="nucleotide sequence ID" value="NM_001078702.1"/>
</dbReference>
<dbReference type="FunCoup" id="Q0P4Y8">
    <property type="interactions" value="888"/>
</dbReference>
<dbReference type="STRING" id="8364.ENSXETP00000013970"/>
<dbReference type="GlyCosmos" id="Q0P4Y8">
    <property type="glycosylation" value="1 site, No reported glycans"/>
</dbReference>
<dbReference type="PaxDb" id="8364-ENSXETP00000049930"/>
<dbReference type="DNASU" id="594899"/>
<dbReference type="GeneID" id="594899"/>
<dbReference type="KEGG" id="xtr:594899"/>
<dbReference type="AGR" id="Xenbase:XB-GENE-974438"/>
<dbReference type="CTD" id="91289"/>
<dbReference type="Xenbase" id="XB-GENE-974438">
    <property type="gene designation" value="lmf2"/>
</dbReference>
<dbReference type="eggNOG" id="ENOG502QTN6">
    <property type="taxonomic scope" value="Eukaryota"/>
</dbReference>
<dbReference type="InParanoid" id="Q0P4Y8"/>
<dbReference type="OMA" id="HYTPWSQ"/>
<dbReference type="OrthoDB" id="5988002at2759"/>
<dbReference type="Reactome" id="R-XTR-8963889">
    <property type="pathway name" value="Assembly of active LPL and LIPC lipase complexes"/>
</dbReference>
<dbReference type="Proteomes" id="UP000008143">
    <property type="component" value="Chromosome 3"/>
</dbReference>
<dbReference type="GO" id="GO:0005789">
    <property type="term" value="C:endoplasmic reticulum membrane"/>
    <property type="evidence" value="ECO:0007669"/>
    <property type="project" value="UniProtKB-SubCell"/>
</dbReference>
<dbReference type="GO" id="GO:0051604">
    <property type="term" value="P:protein maturation"/>
    <property type="evidence" value="ECO:0007669"/>
    <property type="project" value="InterPro"/>
</dbReference>
<dbReference type="InterPro" id="IPR009613">
    <property type="entry name" value="LMF"/>
</dbReference>
<dbReference type="PANTHER" id="PTHR14463">
    <property type="entry name" value="LIPASE MATURATION FACTOR"/>
    <property type="match status" value="1"/>
</dbReference>
<dbReference type="PANTHER" id="PTHR14463:SF5">
    <property type="entry name" value="LIPASE MATURATION FACTOR 2"/>
    <property type="match status" value="1"/>
</dbReference>
<dbReference type="Pfam" id="PF06762">
    <property type="entry name" value="LMF1"/>
    <property type="match status" value="1"/>
</dbReference>
<dbReference type="Pfam" id="PF25179">
    <property type="entry name" value="LMF1_C"/>
    <property type="match status" value="1"/>
</dbReference>
<proteinExistence type="evidence at transcript level"/>
<evidence type="ECO:0000250" key="1"/>
<evidence type="ECO:0000255" key="2"/>
<evidence type="ECO:0000256" key="3">
    <source>
        <dbReference type="SAM" id="MobiDB-lite"/>
    </source>
</evidence>
<evidence type="ECO:0000305" key="4"/>
<reference key="1">
    <citation type="submission" date="2006-08" db="EMBL/GenBank/DDBJ databases">
        <authorList>
            <consortium name="NIH - Xenopus Gene Collection (XGC) project"/>
        </authorList>
    </citation>
    <scope>NUCLEOTIDE SEQUENCE [LARGE SCALE MRNA]</scope>
    <source>
        <tissue>Testis</tissue>
    </source>
</reference>